<accession>Q051U6</accession>
<comment type="function">
    <text evidence="1">Catalyzes the reversible oxidation of malate to oxaloacetate.</text>
</comment>
<comment type="catalytic activity">
    <reaction evidence="1">
        <text>(S)-malate + NAD(+) = oxaloacetate + NADH + H(+)</text>
        <dbReference type="Rhea" id="RHEA:21432"/>
        <dbReference type="ChEBI" id="CHEBI:15378"/>
        <dbReference type="ChEBI" id="CHEBI:15589"/>
        <dbReference type="ChEBI" id="CHEBI:16452"/>
        <dbReference type="ChEBI" id="CHEBI:57540"/>
        <dbReference type="ChEBI" id="CHEBI:57945"/>
        <dbReference type="EC" id="1.1.1.37"/>
    </reaction>
</comment>
<comment type="similarity">
    <text evidence="1">Belongs to the LDH/MDH superfamily. MDH type 2 family.</text>
</comment>
<protein>
    <recommendedName>
        <fullName evidence="1">Malate dehydrogenase</fullName>
        <ecNumber evidence="1">1.1.1.37</ecNumber>
    </recommendedName>
</protein>
<sequence length="326" mass="34791">MGKTVKVAVTGAAGQIGYSLLFRIASGQMFGTDTAVEIQMLELEAAIPAAKGVIMELEDCAFPLLQKVTVSSDLDIAFKDINWALLVGSVPRKAGMERGDLLKINGGIFINQGKAIEKNAASDVRVLVVGNPCNTNCLIAMNNAKGIPSDRWFAMTKLDENRAKSQLASKAGVPVKEVTHLGIWGNHSSTQYPDFYNAKISGKPVTDVISDHEWLKGDFIKNVQQRGAEIIKARGASSAASAANGVVDTVRAIITPTASGDAFSAAIASDGSYGTEKGLIFGFPLKSDGKKVGIVQGLPFNDFAKEKFKTTHDELISERNEVKDML</sequence>
<dbReference type="EC" id="1.1.1.37" evidence="1"/>
<dbReference type="EMBL" id="CP000348">
    <property type="protein sequence ID" value="ABJ78899.1"/>
    <property type="molecule type" value="Genomic_DNA"/>
</dbReference>
<dbReference type="RefSeq" id="WP_011670105.1">
    <property type="nucleotide sequence ID" value="NC_008508.1"/>
</dbReference>
<dbReference type="SMR" id="Q051U6"/>
<dbReference type="KEGG" id="lbl:LBL_1410"/>
<dbReference type="HOGENOM" id="CLU_040727_2_0_12"/>
<dbReference type="GO" id="GO:0030060">
    <property type="term" value="F:L-malate dehydrogenase (NAD+) activity"/>
    <property type="evidence" value="ECO:0007669"/>
    <property type="project" value="UniProtKB-UniRule"/>
</dbReference>
<dbReference type="GO" id="GO:0006108">
    <property type="term" value="P:malate metabolic process"/>
    <property type="evidence" value="ECO:0007669"/>
    <property type="project" value="InterPro"/>
</dbReference>
<dbReference type="GO" id="GO:0006099">
    <property type="term" value="P:tricarboxylic acid cycle"/>
    <property type="evidence" value="ECO:0007669"/>
    <property type="project" value="UniProtKB-UniRule"/>
</dbReference>
<dbReference type="CDD" id="cd01338">
    <property type="entry name" value="MDH_chloroplast-like"/>
    <property type="match status" value="1"/>
</dbReference>
<dbReference type="FunFam" id="3.40.50.720:FF:000010">
    <property type="entry name" value="Malate dehydrogenase"/>
    <property type="match status" value="1"/>
</dbReference>
<dbReference type="FunFam" id="3.90.110.10:FF:000002">
    <property type="entry name" value="Malate dehydrogenase"/>
    <property type="match status" value="1"/>
</dbReference>
<dbReference type="Gene3D" id="3.90.110.10">
    <property type="entry name" value="Lactate dehydrogenase/glycoside hydrolase, family 4, C-terminal"/>
    <property type="match status" value="1"/>
</dbReference>
<dbReference type="Gene3D" id="3.40.50.720">
    <property type="entry name" value="NAD(P)-binding Rossmann-like Domain"/>
    <property type="match status" value="1"/>
</dbReference>
<dbReference type="HAMAP" id="MF_01517">
    <property type="entry name" value="Malate_dehydrog_2"/>
    <property type="match status" value="1"/>
</dbReference>
<dbReference type="InterPro" id="IPR001557">
    <property type="entry name" value="L-lactate/malate_DH"/>
</dbReference>
<dbReference type="InterPro" id="IPR022383">
    <property type="entry name" value="Lactate/malate_DH_C"/>
</dbReference>
<dbReference type="InterPro" id="IPR001236">
    <property type="entry name" value="Lactate/malate_DH_N"/>
</dbReference>
<dbReference type="InterPro" id="IPR015955">
    <property type="entry name" value="Lactate_DH/Glyco_Ohase_4_C"/>
</dbReference>
<dbReference type="InterPro" id="IPR001252">
    <property type="entry name" value="Malate_DH_AS"/>
</dbReference>
<dbReference type="InterPro" id="IPR010945">
    <property type="entry name" value="Malate_DH_type2"/>
</dbReference>
<dbReference type="InterPro" id="IPR036291">
    <property type="entry name" value="NAD(P)-bd_dom_sf"/>
</dbReference>
<dbReference type="NCBIfam" id="TIGR01759">
    <property type="entry name" value="MalateDH-SF1"/>
    <property type="match status" value="1"/>
</dbReference>
<dbReference type="NCBIfam" id="NF003916">
    <property type="entry name" value="PRK05442.1"/>
    <property type="match status" value="1"/>
</dbReference>
<dbReference type="PANTHER" id="PTHR23382">
    <property type="entry name" value="MALATE DEHYDROGENASE"/>
    <property type="match status" value="1"/>
</dbReference>
<dbReference type="Pfam" id="PF02866">
    <property type="entry name" value="Ldh_1_C"/>
    <property type="match status" value="1"/>
</dbReference>
<dbReference type="Pfam" id="PF00056">
    <property type="entry name" value="Ldh_1_N"/>
    <property type="match status" value="1"/>
</dbReference>
<dbReference type="PIRSF" id="PIRSF000102">
    <property type="entry name" value="Lac_mal_DH"/>
    <property type="match status" value="1"/>
</dbReference>
<dbReference type="SUPFAM" id="SSF56327">
    <property type="entry name" value="LDH C-terminal domain-like"/>
    <property type="match status" value="1"/>
</dbReference>
<dbReference type="SUPFAM" id="SSF51735">
    <property type="entry name" value="NAD(P)-binding Rossmann-fold domains"/>
    <property type="match status" value="1"/>
</dbReference>
<dbReference type="PROSITE" id="PS00068">
    <property type="entry name" value="MDH"/>
    <property type="match status" value="1"/>
</dbReference>
<reference key="1">
    <citation type="journal article" date="2006" name="Proc. Natl. Acad. Sci. U.S.A.">
        <title>Genome reduction in Leptospira borgpetersenii reflects limited transmission potential.</title>
        <authorList>
            <person name="Bulach D.M."/>
            <person name="Zuerner R.L."/>
            <person name="Wilson P."/>
            <person name="Seemann T."/>
            <person name="McGrath A."/>
            <person name="Cullen P.A."/>
            <person name="Davis J."/>
            <person name="Johnson M."/>
            <person name="Kuczek E."/>
            <person name="Alt D.P."/>
            <person name="Peterson-Burch B."/>
            <person name="Coppel R.L."/>
            <person name="Rood J.I."/>
            <person name="Davies J.K."/>
            <person name="Adler B."/>
        </authorList>
    </citation>
    <scope>NUCLEOTIDE SEQUENCE [LARGE SCALE GENOMIC DNA]</scope>
    <source>
        <strain>L550</strain>
    </source>
</reference>
<gene>
    <name evidence="1" type="primary">mdh</name>
    <name type="ordered locus">LBL_1410</name>
</gene>
<evidence type="ECO:0000255" key="1">
    <source>
        <dbReference type="HAMAP-Rule" id="MF_01517"/>
    </source>
</evidence>
<name>MDH_LEPBL</name>
<organism>
    <name type="scientific">Leptospira borgpetersenii serovar Hardjo-bovis (strain L550)</name>
    <dbReference type="NCBI Taxonomy" id="355276"/>
    <lineage>
        <taxon>Bacteria</taxon>
        <taxon>Pseudomonadati</taxon>
        <taxon>Spirochaetota</taxon>
        <taxon>Spirochaetia</taxon>
        <taxon>Leptospirales</taxon>
        <taxon>Leptospiraceae</taxon>
        <taxon>Leptospira</taxon>
    </lineage>
</organism>
<feature type="chain" id="PRO_0000294389" description="Malate dehydrogenase">
    <location>
        <begin position="1"/>
        <end position="326"/>
    </location>
</feature>
<feature type="active site" description="Proton acceptor" evidence="1">
    <location>
        <position position="187"/>
    </location>
</feature>
<feature type="binding site" evidence="1">
    <location>
        <begin position="11"/>
        <end position="17"/>
    </location>
    <ligand>
        <name>NAD(+)</name>
        <dbReference type="ChEBI" id="CHEBI:57540"/>
    </ligand>
</feature>
<feature type="binding site" evidence="1">
    <location>
        <position position="92"/>
    </location>
    <ligand>
        <name>substrate</name>
    </ligand>
</feature>
<feature type="binding site" evidence="1">
    <location>
        <position position="98"/>
    </location>
    <ligand>
        <name>substrate</name>
    </ligand>
</feature>
<feature type="binding site" evidence="1">
    <location>
        <position position="105"/>
    </location>
    <ligand>
        <name>NAD(+)</name>
        <dbReference type="ChEBI" id="CHEBI:57540"/>
    </ligand>
</feature>
<feature type="binding site" evidence="1">
    <location>
        <position position="112"/>
    </location>
    <ligand>
        <name>NAD(+)</name>
        <dbReference type="ChEBI" id="CHEBI:57540"/>
    </ligand>
</feature>
<feature type="binding site" evidence="1">
    <location>
        <begin position="129"/>
        <end position="131"/>
    </location>
    <ligand>
        <name>NAD(+)</name>
        <dbReference type="ChEBI" id="CHEBI:57540"/>
    </ligand>
</feature>
<feature type="binding site" evidence="1">
    <location>
        <position position="131"/>
    </location>
    <ligand>
        <name>substrate</name>
    </ligand>
</feature>
<feature type="binding site" evidence="1">
    <location>
        <position position="162"/>
    </location>
    <ligand>
        <name>substrate</name>
    </ligand>
</feature>
<keyword id="KW-0520">NAD</keyword>
<keyword id="KW-0560">Oxidoreductase</keyword>
<keyword id="KW-0816">Tricarboxylic acid cycle</keyword>
<proteinExistence type="inferred from homology"/>